<name>GLYCO_VSIVC</name>
<feature type="signal peptide" evidence="4">
    <location>
        <begin position="1"/>
        <end position="16"/>
    </location>
</feature>
<feature type="chain" id="PRO_0000287251" description="Glycoprotein">
    <location>
        <begin position="17"/>
        <end position="511"/>
    </location>
</feature>
<feature type="topological domain" description="Virion surface" evidence="4">
    <location>
        <begin position="17"/>
        <end position="467"/>
    </location>
</feature>
<feature type="transmembrane region" description="Helical" evidence="4">
    <location>
        <begin position="468"/>
        <end position="488"/>
    </location>
</feature>
<feature type="topological domain" description="Intravirion" evidence="4">
    <location>
        <begin position="489"/>
        <end position="511"/>
    </location>
</feature>
<feature type="region of interest" description="Trimerization" evidence="3">
    <location>
        <begin position="18"/>
        <end position="35"/>
    </location>
</feature>
<feature type="region of interest" description="Fusion peptide" evidence="3">
    <location>
        <begin position="53"/>
        <end position="172"/>
    </location>
</feature>
<feature type="region of interest" description="Trimerization" evidence="3">
    <location>
        <begin position="259"/>
        <end position="309"/>
    </location>
</feature>
<feature type="region of interest" description="Trimerization" evidence="3">
    <location>
        <begin position="383"/>
        <end position="405"/>
    </location>
</feature>
<feature type="short sequence motif" description="basolateral targeting ex vivo" evidence="1">
    <location>
        <begin position="496"/>
        <end position="506"/>
    </location>
</feature>
<feature type="site" description="Involved in the interaction with host LDL receptor" evidence="3">
    <location>
        <position position="63"/>
    </location>
</feature>
<feature type="site" description="pH sensor in the pre-fusion state" evidence="3">
    <location>
        <position position="76"/>
    </location>
</feature>
<feature type="site" description="pH sensor in the pre-fusion state" evidence="3">
    <location>
        <position position="178"/>
    </location>
</feature>
<feature type="site" description="Involved in the interaction with host LDL receptor" evidence="3">
    <location>
        <position position="370"/>
    </location>
</feature>
<feature type="site" description="pH sensor in the pre-fusion state" evidence="3">
    <location>
        <position position="423"/>
    </location>
</feature>
<feature type="lipid moiety-binding region" description="S-palmitoyl cysteine; by host" evidence="1">
    <location>
        <position position="489"/>
    </location>
</feature>
<feature type="glycosylation site" description="N-linked (GlcNAc...) asparagine; by host" evidence="4">
    <location>
        <position position="179"/>
    </location>
</feature>
<feature type="glycosylation site" description="N-linked (GlcNAc...) asparagine; by host" evidence="4">
    <location>
        <position position="336"/>
    </location>
</feature>
<feature type="disulfide bond" evidence="1">
    <location>
        <begin position="40"/>
        <end position="300"/>
    </location>
</feature>
<feature type="disulfide bond" evidence="1">
    <location>
        <begin position="75"/>
        <end position="108"/>
    </location>
</feature>
<feature type="disulfide bond" evidence="1">
    <location>
        <begin position="84"/>
        <end position="130"/>
    </location>
</feature>
<feature type="disulfide bond" evidence="1">
    <location>
        <begin position="169"/>
        <end position="174"/>
    </location>
</feature>
<feature type="disulfide bond" evidence="1">
    <location>
        <begin position="193"/>
        <end position="240"/>
    </location>
</feature>
<feature type="disulfide bond" evidence="1">
    <location>
        <begin position="235"/>
        <end position="269"/>
    </location>
</feature>
<reference key="1">
    <citation type="journal article" date="2002" name="J. Gen. Virol.">
        <title>Full-length genome analysis of natural isolates of vesicular stomatitis virus (Indiana 1 serotype) from North, Central and South America.</title>
        <authorList>
            <person name="Rodriguez L.L."/>
            <person name="Pauszek S.J."/>
            <person name="Bunch T.A."/>
            <person name="Schumann K.R."/>
        </authorList>
    </citation>
    <scope>NUCLEOTIDE SEQUENCE [GENOMIC RNA]</scope>
</reference>
<proteinExistence type="evidence at protein level"/>
<comment type="function">
    <text evidence="2">Attaches the virus to host LDL receptors, inducing clathrin-dependent endocytosis of the virion. In the endosome, the acidic pH induces conformational changes in the glycoprotein trimer, which trigger fusion between virus and endosomal membrane.</text>
</comment>
<comment type="subunit">
    <text evidence="2">Homotrimer. Interacts with host LDL at target cell surface.</text>
</comment>
<comment type="subcellular location">
    <subcellularLocation>
        <location evidence="2">Virion membrane</location>
        <topology evidence="2">Single-pass type I membrane protein</topology>
    </subcellularLocation>
    <subcellularLocation>
        <location evidence="2">Host membrane</location>
        <topology evidence="2">Single-pass type I membrane protein</topology>
    </subcellularLocation>
</comment>
<comment type="PTM">
    <text evidence="2">Glycosylated by host. Palmitoylated by host.</text>
</comment>
<comment type="biotechnology">
    <text>Used to pseudotype many virus-like particles like lentiviral vector, because of its broad spectrum of host cell tropism. Also used in viral vectors studies in cancer therapy.</text>
</comment>
<comment type="similarity">
    <text evidence="5">Belongs to the vesiculovirus glycoprotein family.</text>
</comment>
<gene>
    <name type="primary">G</name>
</gene>
<dbReference type="EMBL" id="AF473866">
    <property type="protein sequence ID" value="AAN16993.1"/>
    <property type="molecule type" value="Genomic_RNA"/>
</dbReference>
<dbReference type="SMR" id="Q8B0H1"/>
<dbReference type="GlyCosmos" id="Q8B0H1">
    <property type="glycosylation" value="2 sites, No reported glycans"/>
</dbReference>
<dbReference type="Proteomes" id="UP000007623">
    <property type="component" value="Genome"/>
</dbReference>
<dbReference type="GO" id="GO:0033644">
    <property type="term" value="C:host cell membrane"/>
    <property type="evidence" value="ECO:0007669"/>
    <property type="project" value="UniProtKB-SubCell"/>
</dbReference>
<dbReference type="GO" id="GO:0016020">
    <property type="term" value="C:membrane"/>
    <property type="evidence" value="ECO:0007669"/>
    <property type="project" value="UniProtKB-KW"/>
</dbReference>
<dbReference type="GO" id="GO:0019031">
    <property type="term" value="C:viral envelope"/>
    <property type="evidence" value="ECO:0007669"/>
    <property type="project" value="UniProtKB-KW"/>
</dbReference>
<dbReference type="GO" id="GO:0055036">
    <property type="term" value="C:virion membrane"/>
    <property type="evidence" value="ECO:0007669"/>
    <property type="project" value="UniProtKB-SubCell"/>
</dbReference>
<dbReference type="GO" id="GO:0075512">
    <property type="term" value="P:clathrin-dependent endocytosis of virus by host cell"/>
    <property type="evidence" value="ECO:0007669"/>
    <property type="project" value="UniProtKB-KW"/>
</dbReference>
<dbReference type="GO" id="GO:0098670">
    <property type="term" value="P:entry receptor-mediated virion attachment to host cell"/>
    <property type="evidence" value="ECO:0007669"/>
    <property type="project" value="UniProtKB-KW"/>
</dbReference>
<dbReference type="GO" id="GO:0039654">
    <property type="term" value="P:fusion of virus membrane with host endosome membrane"/>
    <property type="evidence" value="ECO:0007669"/>
    <property type="project" value="UniProtKB-KW"/>
</dbReference>
<dbReference type="Gene3D" id="2.30.29.130">
    <property type="match status" value="2"/>
</dbReference>
<dbReference type="Gene3D" id="2.30.30.640">
    <property type="match status" value="1"/>
</dbReference>
<dbReference type="InterPro" id="IPR055447">
    <property type="entry name" value="Rhabdo_glycop_CD"/>
</dbReference>
<dbReference type="InterPro" id="IPR001903">
    <property type="entry name" value="Rhabdo_glycop_FD"/>
</dbReference>
<dbReference type="Pfam" id="PF24833">
    <property type="entry name" value="Rhabdo_glycop_CD"/>
    <property type="match status" value="1"/>
</dbReference>
<dbReference type="Pfam" id="PF00974">
    <property type="entry name" value="Rhabdo_glycop_FD"/>
    <property type="match status" value="1"/>
</dbReference>
<dbReference type="SUPFAM" id="SSF161008">
    <property type="entry name" value="Viral glycoprotein ectodomain-like"/>
    <property type="match status" value="1"/>
</dbReference>
<keyword id="KW-1165">Clathrin-mediated endocytosis of virus by host</keyword>
<keyword id="KW-1015">Disulfide bond</keyword>
<keyword id="KW-1170">Fusion of virus membrane with host endosomal membrane</keyword>
<keyword id="KW-1168">Fusion of virus membrane with host membrane</keyword>
<keyword id="KW-0325">Glycoprotein</keyword>
<keyword id="KW-1043">Host membrane</keyword>
<keyword id="KW-0945">Host-virus interaction</keyword>
<keyword id="KW-0449">Lipoprotein</keyword>
<keyword id="KW-0472">Membrane</keyword>
<keyword id="KW-0564">Palmitate</keyword>
<keyword id="KW-0732">Signal</keyword>
<keyword id="KW-0812">Transmembrane</keyword>
<keyword id="KW-1133">Transmembrane helix</keyword>
<keyword id="KW-1161">Viral attachment to host cell</keyword>
<keyword id="KW-1234">Viral attachment to host entry receptor</keyword>
<keyword id="KW-0261">Viral envelope protein</keyword>
<keyword id="KW-1162">Viral penetration into host cytoplasm</keyword>
<keyword id="KW-0946">Virion</keyword>
<keyword id="KW-1164">Virus endocytosis by host</keyword>
<keyword id="KW-1160">Virus entry into host cell</keyword>
<evidence type="ECO:0000250" key="1"/>
<evidence type="ECO:0000250" key="2">
    <source>
        <dbReference type="UniProtKB" id="P03522"/>
    </source>
</evidence>
<evidence type="ECO:0000250" key="3">
    <source>
        <dbReference type="UniProtKB" id="P0C2X0"/>
    </source>
</evidence>
<evidence type="ECO:0000255" key="4"/>
<evidence type="ECO:0000305" key="5"/>
<sequence>MKCLLYLALLFIGVYCKFTTVFPHNKKGDWKNVPSNYHYCPSSSDLNWHNDLIGTALQVKMPKSHKAIQADGWMCHASKWVTTCDFRWYGPKYITHSIRSFTPSVEQCKESIEQTKQGTWLNPGFPPQSCGYATVTDAEAVIVQVTPHHVLVDEYTGEWVDSQFINGKCSDDICPTVHNSTTWHSDYKVKGLCDSNLISMDITFFSEDGELSSLGKEGTGFRSNYFAYETGDKACKMQYCKHWGVRLPSGVWFEMADKNLFAAAKFPECPEGSSISAPSQTSVDVSLIQDVERILDYSLCQETWSKIRAGLPISPVDLSYLAPKNPGTGPAFTIINGTLKYFETRYIRVDIAAPILSRMVGMISGTTTERELWEDWAPYEDVEIGPNGVLRTSSGYKFPLYMIGHGMLDSDLHLSSKAQVFEHPHIPDATSQLPDDETLFFGDTGLSKDPIELVEGWFSGWKSSIASFFFIIGLIIGLFFVLRIGVYLCIKLKHTNKRQIYTDIEMNRLGK</sequence>
<organismHost>
    <name type="scientific">Aedes</name>
    <dbReference type="NCBI Taxonomy" id="7158"/>
</organismHost>
<organismHost>
    <name type="scientific">Bos taurus</name>
    <name type="common">Bovine</name>
    <dbReference type="NCBI Taxonomy" id="9913"/>
</organismHost>
<organismHost>
    <name type="scientific">Culicoides</name>
    <dbReference type="NCBI Taxonomy" id="58271"/>
</organismHost>
<organismHost>
    <name type="scientific">Equus asinus</name>
    <name type="common">Donkey</name>
    <name type="synonym">Equus africanus asinus</name>
    <dbReference type="NCBI Taxonomy" id="9793"/>
</organismHost>
<organismHost>
    <name type="scientific">Equus caballus</name>
    <name type="common">Horse</name>
    <dbReference type="NCBI Taxonomy" id="9796"/>
</organismHost>
<organismHost>
    <name type="scientific">Homo sapiens</name>
    <name type="common">Human</name>
    <dbReference type="NCBI Taxonomy" id="9606"/>
</organismHost>
<organismHost>
    <name type="scientific">Lutzomyia</name>
    <dbReference type="NCBI Taxonomy" id="252607"/>
</organismHost>
<organismHost>
    <name type="scientific">Musca domestica</name>
    <name type="common">House fly</name>
    <dbReference type="NCBI Taxonomy" id="7370"/>
</organismHost>
<organismHost>
    <name type="scientific">Simuliidae</name>
    <name type="common">black flies</name>
    <dbReference type="NCBI Taxonomy" id="7190"/>
</organismHost>
<organismHost>
    <name type="scientific">Sus scrofa</name>
    <name type="common">Pig</name>
    <dbReference type="NCBI Taxonomy" id="9823"/>
</organismHost>
<accession>Q8B0H1</accession>
<protein>
    <recommendedName>
        <fullName>Glycoprotein</fullName>
    </recommendedName>
</protein>
<organism>
    <name type="scientific">Vesicular stomatitis Indiana virus (strain 94GUB Central America)</name>
    <name type="common">VSIV</name>
    <dbReference type="NCBI Taxonomy" id="434489"/>
    <lineage>
        <taxon>Viruses</taxon>
        <taxon>Riboviria</taxon>
        <taxon>Orthornavirae</taxon>
        <taxon>Negarnaviricota</taxon>
        <taxon>Haploviricotina</taxon>
        <taxon>Monjiviricetes</taxon>
        <taxon>Mononegavirales</taxon>
        <taxon>Rhabdoviridae</taxon>
        <taxon>Alpharhabdovirinae</taxon>
        <taxon>Vesiculovirus</taxon>
        <taxon>Vesiculovirus indiana</taxon>
    </lineage>
</organism>